<sequence>MKDSLRERLDQMVDRFEEVTALLSDPDTISDNNKFRELSMEHSELSEITALWQRYRQAEIDKKDAQEMINDASDPDMKEMMQEEIDSASRDIEAMEEELNVMMLPKDPNDKVPAFLEIRAGTGGDEAAIFSGDLFRMYERYASSQGWTIEVLSANEGEHGGYKEIISRVSGNDVYGRLKFESGAHRVQRVPETESQGRVHTSACTVAVMPEVEIDDTVELNPADIRMDTFRSSGAGGQHVNTTDSAVRLTHIPTGVVAECQQERSQHKNRAKAMQMLIARIQQAKVQEQVDTADALRRNLVGSGDRSERIRTYNFPQGRMTDHRINLTLYKLDAIMEGDLTELLDALNREHQADLMASIGGGDD</sequence>
<proteinExistence type="inferred from homology"/>
<organism>
    <name type="scientific">Psychrobacter sp. (strain PRwf-1)</name>
    <dbReference type="NCBI Taxonomy" id="349106"/>
    <lineage>
        <taxon>Bacteria</taxon>
        <taxon>Pseudomonadati</taxon>
        <taxon>Pseudomonadota</taxon>
        <taxon>Gammaproteobacteria</taxon>
        <taxon>Moraxellales</taxon>
        <taxon>Moraxellaceae</taxon>
        <taxon>Psychrobacter</taxon>
    </lineage>
</organism>
<keyword id="KW-0963">Cytoplasm</keyword>
<keyword id="KW-0488">Methylation</keyword>
<keyword id="KW-0648">Protein biosynthesis</keyword>
<evidence type="ECO:0000255" key="1">
    <source>
        <dbReference type="HAMAP-Rule" id="MF_00093"/>
    </source>
</evidence>
<gene>
    <name evidence="1" type="primary">prfA</name>
    <name type="ordered locus">PsycPRwf_1457</name>
</gene>
<dbReference type="EMBL" id="CP000713">
    <property type="protein sequence ID" value="ABQ94402.1"/>
    <property type="molecule type" value="Genomic_DNA"/>
</dbReference>
<dbReference type="SMR" id="A5WFG1"/>
<dbReference type="STRING" id="349106.PsycPRwf_1457"/>
<dbReference type="KEGG" id="prw:PsycPRwf_1457"/>
<dbReference type="eggNOG" id="COG0216">
    <property type="taxonomic scope" value="Bacteria"/>
</dbReference>
<dbReference type="HOGENOM" id="CLU_036856_0_1_6"/>
<dbReference type="GO" id="GO:0005737">
    <property type="term" value="C:cytoplasm"/>
    <property type="evidence" value="ECO:0007669"/>
    <property type="project" value="UniProtKB-SubCell"/>
</dbReference>
<dbReference type="GO" id="GO:0016149">
    <property type="term" value="F:translation release factor activity, codon specific"/>
    <property type="evidence" value="ECO:0007669"/>
    <property type="project" value="UniProtKB-UniRule"/>
</dbReference>
<dbReference type="FunFam" id="3.30.160.20:FF:000004">
    <property type="entry name" value="Peptide chain release factor 1"/>
    <property type="match status" value="1"/>
</dbReference>
<dbReference type="FunFam" id="3.30.70.1660:FF:000002">
    <property type="entry name" value="Peptide chain release factor 1"/>
    <property type="match status" value="1"/>
</dbReference>
<dbReference type="FunFam" id="3.30.70.1660:FF:000004">
    <property type="entry name" value="Peptide chain release factor 1"/>
    <property type="match status" value="1"/>
</dbReference>
<dbReference type="Gene3D" id="3.30.160.20">
    <property type="match status" value="1"/>
</dbReference>
<dbReference type="Gene3D" id="3.30.70.1660">
    <property type="match status" value="2"/>
</dbReference>
<dbReference type="Gene3D" id="6.10.140.1950">
    <property type="match status" value="1"/>
</dbReference>
<dbReference type="HAMAP" id="MF_00093">
    <property type="entry name" value="Rel_fac_1"/>
    <property type="match status" value="1"/>
</dbReference>
<dbReference type="InterPro" id="IPR005139">
    <property type="entry name" value="PCRF"/>
</dbReference>
<dbReference type="InterPro" id="IPR000352">
    <property type="entry name" value="Pep_chain_release_fac_I"/>
</dbReference>
<dbReference type="InterPro" id="IPR045853">
    <property type="entry name" value="Pep_chain_release_fac_I_sf"/>
</dbReference>
<dbReference type="InterPro" id="IPR050057">
    <property type="entry name" value="Prokaryotic/Mito_RF"/>
</dbReference>
<dbReference type="InterPro" id="IPR004373">
    <property type="entry name" value="RF-1"/>
</dbReference>
<dbReference type="NCBIfam" id="TIGR00019">
    <property type="entry name" value="prfA"/>
    <property type="match status" value="1"/>
</dbReference>
<dbReference type="NCBIfam" id="NF001859">
    <property type="entry name" value="PRK00591.1"/>
    <property type="match status" value="1"/>
</dbReference>
<dbReference type="PANTHER" id="PTHR43804">
    <property type="entry name" value="LD18447P"/>
    <property type="match status" value="1"/>
</dbReference>
<dbReference type="PANTHER" id="PTHR43804:SF7">
    <property type="entry name" value="LD18447P"/>
    <property type="match status" value="1"/>
</dbReference>
<dbReference type="Pfam" id="PF03462">
    <property type="entry name" value="PCRF"/>
    <property type="match status" value="1"/>
</dbReference>
<dbReference type="Pfam" id="PF00472">
    <property type="entry name" value="RF-1"/>
    <property type="match status" value="1"/>
</dbReference>
<dbReference type="SMART" id="SM00937">
    <property type="entry name" value="PCRF"/>
    <property type="match status" value="1"/>
</dbReference>
<dbReference type="SUPFAM" id="SSF75620">
    <property type="entry name" value="Release factor"/>
    <property type="match status" value="1"/>
</dbReference>
<dbReference type="PROSITE" id="PS00745">
    <property type="entry name" value="RF_PROK_I"/>
    <property type="match status" value="1"/>
</dbReference>
<protein>
    <recommendedName>
        <fullName evidence="1">Peptide chain release factor 1</fullName>
        <shortName evidence="1">RF-1</shortName>
    </recommendedName>
</protein>
<comment type="function">
    <text evidence="1">Peptide chain release factor 1 directs the termination of translation in response to the peptide chain termination codons UAG and UAA.</text>
</comment>
<comment type="subcellular location">
    <subcellularLocation>
        <location evidence="1">Cytoplasm</location>
    </subcellularLocation>
</comment>
<comment type="PTM">
    <text evidence="1">Methylated by PrmC. Methylation increases the termination efficiency of RF1.</text>
</comment>
<comment type="similarity">
    <text evidence="1">Belongs to the prokaryotic/mitochondrial release factor family.</text>
</comment>
<accession>A5WFG1</accession>
<reference key="1">
    <citation type="submission" date="2007-05" db="EMBL/GenBank/DDBJ databases">
        <title>Complete sequence of chromosome of Psychrobacter sp. PRwf-1.</title>
        <authorList>
            <consortium name="US DOE Joint Genome Institute"/>
            <person name="Copeland A."/>
            <person name="Lucas S."/>
            <person name="Lapidus A."/>
            <person name="Barry K."/>
            <person name="Detter J.C."/>
            <person name="Glavina del Rio T."/>
            <person name="Hammon N."/>
            <person name="Israni S."/>
            <person name="Dalin E."/>
            <person name="Tice H."/>
            <person name="Pitluck S."/>
            <person name="Chain P."/>
            <person name="Malfatti S."/>
            <person name="Shin M."/>
            <person name="Vergez L."/>
            <person name="Schmutz J."/>
            <person name="Larimer F."/>
            <person name="Land M."/>
            <person name="Hauser L."/>
            <person name="Kyrpides N."/>
            <person name="Kim E."/>
            <person name="Tiedje J."/>
            <person name="Richardson P."/>
        </authorList>
    </citation>
    <scope>NUCLEOTIDE SEQUENCE [LARGE SCALE GENOMIC DNA]</scope>
    <source>
        <strain>PRwf-1</strain>
    </source>
</reference>
<name>RF1_PSYWF</name>
<feature type="chain" id="PRO_1000071265" description="Peptide chain release factor 1">
    <location>
        <begin position="1"/>
        <end position="364"/>
    </location>
</feature>
<feature type="modified residue" description="N5-methylglutamine" evidence="1">
    <location>
        <position position="238"/>
    </location>
</feature>